<protein>
    <recommendedName>
        <fullName>Alpha-glucosidase MAL32</fullName>
        <ecNumber>3.2.1.20</ecNumber>
    </recommendedName>
    <alternativeName>
        <fullName>Maltase</fullName>
    </alternativeName>
</protein>
<accession>P38158</accession>
<accession>D6VQU5</accession>
<feature type="chain" id="PRO_0000054329" description="Alpha-glucosidase MAL32">
    <location>
        <begin position="1"/>
        <end position="584"/>
    </location>
</feature>
<feature type="active site" description="Nucleophile" evidence="1">
    <location>
        <position position="214"/>
    </location>
</feature>
<feature type="active site" description="Proton donor" evidence="1">
    <location>
        <position position="276"/>
    </location>
</feature>
<feature type="site" description="Transition state stabilizer" evidence="1">
    <location>
        <position position="349"/>
    </location>
</feature>
<dbReference type="EC" id="3.2.1.20"/>
<dbReference type="EMBL" id="Z36168">
    <property type="protein sequence ID" value="CAA85264.1"/>
    <property type="molecule type" value="Genomic_DNA"/>
</dbReference>
<dbReference type="EMBL" id="BK006936">
    <property type="protein sequence ID" value="DAA07415.1"/>
    <property type="molecule type" value="Genomic_DNA"/>
</dbReference>
<dbReference type="PIR" id="S46183">
    <property type="entry name" value="S46183"/>
</dbReference>
<dbReference type="RefSeq" id="NP_009858.3">
    <property type="nucleotide sequence ID" value="NM_001178647.3"/>
</dbReference>
<dbReference type="PDB" id="1VAD">
    <property type="method" value="X-ray"/>
    <property type="resolution" value="2.50 A"/>
    <property type="chains" value="P=438-446"/>
</dbReference>
<dbReference type="PDBsum" id="1VAD"/>
<dbReference type="SMR" id="P38158"/>
<dbReference type="BioGRID" id="32992">
    <property type="interactions" value="58"/>
</dbReference>
<dbReference type="DIP" id="DIP-6822N"/>
<dbReference type="FunCoup" id="P38158">
    <property type="interactions" value="1112"/>
</dbReference>
<dbReference type="IntAct" id="P38158">
    <property type="interactions" value="4"/>
</dbReference>
<dbReference type="STRING" id="4932.YBR299W"/>
<dbReference type="BindingDB" id="P38158"/>
<dbReference type="ChEMBL" id="CHEMBL5291954"/>
<dbReference type="Allergome" id="8262">
    <property type="allergen name" value="Sac c Glucosidase"/>
</dbReference>
<dbReference type="CAZy" id="GH13">
    <property type="family name" value="Glycoside Hydrolase Family 13"/>
</dbReference>
<dbReference type="PaxDb" id="4932-YBR299W"/>
<dbReference type="PeptideAtlas" id="P38158"/>
<dbReference type="TopDownProteomics" id="P38158"/>
<dbReference type="EnsemblFungi" id="YBR299W_mRNA">
    <property type="protein sequence ID" value="YBR299W"/>
    <property type="gene ID" value="YBR299W"/>
</dbReference>
<dbReference type="GeneID" id="852602"/>
<dbReference type="KEGG" id="sce:YBR299W"/>
<dbReference type="AGR" id="SGD:S000000503"/>
<dbReference type="SGD" id="S000000503">
    <property type="gene designation" value="MAL32"/>
</dbReference>
<dbReference type="VEuPathDB" id="FungiDB:YBR299W"/>
<dbReference type="eggNOG" id="KOG0471">
    <property type="taxonomic scope" value="Eukaryota"/>
</dbReference>
<dbReference type="GeneTree" id="ENSGT00940000176291"/>
<dbReference type="HOGENOM" id="CLU_006462_2_3_1"/>
<dbReference type="InParanoid" id="P38158"/>
<dbReference type="OMA" id="LMYEWRD"/>
<dbReference type="OrthoDB" id="1740265at2759"/>
<dbReference type="BioCyc" id="YEAST:YBR299W-MONOMER"/>
<dbReference type="BRENDA" id="3.2.1.20">
    <property type="organism ID" value="984"/>
</dbReference>
<dbReference type="BioGRID-ORCS" id="852602">
    <property type="hits" value="0 hits in 10 CRISPR screens"/>
</dbReference>
<dbReference type="EvolutionaryTrace" id="P38158"/>
<dbReference type="PRO" id="PR:P38158"/>
<dbReference type="Proteomes" id="UP000002311">
    <property type="component" value="Chromosome II"/>
</dbReference>
<dbReference type="RNAct" id="P38158">
    <property type="molecule type" value="protein"/>
</dbReference>
<dbReference type="GO" id="GO:0005886">
    <property type="term" value="C:plasma membrane"/>
    <property type="evidence" value="ECO:0007005"/>
    <property type="project" value="SGD"/>
</dbReference>
<dbReference type="GO" id="GO:0004558">
    <property type="term" value="F:alpha-1,4-glucosidase activity"/>
    <property type="evidence" value="ECO:0000314"/>
    <property type="project" value="SGD"/>
</dbReference>
<dbReference type="GO" id="GO:0004556">
    <property type="term" value="F:alpha-amylase activity"/>
    <property type="evidence" value="ECO:0000318"/>
    <property type="project" value="GO_Central"/>
</dbReference>
<dbReference type="GO" id="GO:0033934">
    <property type="term" value="F:glucan 1,4-alpha-maltotriohydrolase activity"/>
    <property type="evidence" value="ECO:0000314"/>
    <property type="project" value="SGD"/>
</dbReference>
<dbReference type="GO" id="GO:0004574">
    <property type="term" value="F:oligo-1,6-glucosidase activity"/>
    <property type="evidence" value="ECO:0000318"/>
    <property type="project" value="GO_Central"/>
</dbReference>
<dbReference type="GO" id="GO:0004575">
    <property type="term" value="F:sucrose alpha-glucosidase activity"/>
    <property type="evidence" value="ECO:0000318"/>
    <property type="project" value="GO_Central"/>
</dbReference>
<dbReference type="GO" id="GO:0000025">
    <property type="term" value="P:maltose catabolic process"/>
    <property type="evidence" value="ECO:0000314"/>
    <property type="project" value="SGD"/>
</dbReference>
<dbReference type="GO" id="GO:0005987">
    <property type="term" value="P:sucrose catabolic process"/>
    <property type="evidence" value="ECO:0000314"/>
    <property type="project" value="SGD"/>
</dbReference>
<dbReference type="CDD" id="cd11333">
    <property type="entry name" value="AmyAc_SI_OligoGlu_DGase"/>
    <property type="match status" value="1"/>
</dbReference>
<dbReference type="FunFam" id="3.20.20.80:FF:000064">
    <property type="entry name" value="Oligo-1,6-glucosidase"/>
    <property type="match status" value="1"/>
</dbReference>
<dbReference type="FunFam" id="3.90.400.10:FF:000004">
    <property type="entry name" value="Oligo-1,6-glucosidase"/>
    <property type="match status" value="1"/>
</dbReference>
<dbReference type="FunFam" id="2.60.40.1180:FF:000027">
    <property type="entry name" value="Oligo-1,6-glucosidase IMA1"/>
    <property type="match status" value="1"/>
</dbReference>
<dbReference type="FunFam" id="3.20.20.80:FF:000087">
    <property type="entry name" value="Oligo-1,6-glucosidase IMA1"/>
    <property type="match status" value="1"/>
</dbReference>
<dbReference type="Gene3D" id="3.20.20.80">
    <property type="entry name" value="Glycosidases"/>
    <property type="match status" value="2"/>
</dbReference>
<dbReference type="Gene3D" id="2.60.40.1180">
    <property type="entry name" value="Golgi alpha-mannosidase II"/>
    <property type="match status" value="1"/>
</dbReference>
<dbReference type="Gene3D" id="3.90.400.10">
    <property type="entry name" value="Oligo-1,6-glucosidase, Domain 2"/>
    <property type="match status" value="1"/>
</dbReference>
<dbReference type="InterPro" id="IPR006047">
    <property type="entry name" value="Glyco_hydro_13_cat_dom"/>
</dbReference>
<dbReference type="InterPro" id="IPR013780">
    <property type="entry name" value="Glyco_hydro_b"/>
</dbReference>
<dbReference type="InterPro" id="IPR017853">
    <property type="entry name" value="Glycoside_hydrolase_SF"/>
</dbReference>
<dbReference type="InterPro" id="IPR045857">
    <property type="entry name" value="O16G_dom_2"/>
</dbReference>
<dbReference type="PANTHER" id="PTHR10357">
    <property type="entry name" value="ALPHA-AMYLASE FAMILY MEMBER"/>
    <property type="match status" value="1"/>
</dbReference>
<dbReference type="PANTHER" id="PTHR10357:SF179">
    <property type="entry name" value="NEUTRAL AND BASIC AMINO ACID TRANSPORT PROTEIN RBAT"/>
    <property type="match status" value="1"/>
</dbReference>
<dbReference type="Pfam" id="PF00128">
    <property type="entry name" value="Alpha-amylase"/>
    <property type="match status" value="1"/>
</dbReference>
<dbReference type="SMART" id="SM00642">
    <property type="entry name" value="Aamy"/>
    <property type="match status" value="1"/>
</dbReference>
<dbReference type="SUPFAM" id="SSF51445">
    <property type="entry name" value="(Trans)glycosidases"/>
    <property type="match status" value="1"/>
</dbReference>
<dbReference type="SUPFAM" id="SSF51011">
    <property type="entry name" value="Glycosyl hydrolase domain"/>
    <property type="match status" value="1"/>
</dbReference>
<gene>
    <name type="primary">MAL32</name>
    <name type="synonym">MAL3S</name>
    <name type="ordered locus">YBR299W</name>
    <name type="ORF">YBR2117</name>
</gene>
<organism>
    <name type="scientific">Saccharomyces cerevisiae (strain ATCC 204508 / S288c)</name>
    <name type="common">Baker's yeast</name>
    <dbReference type="NCBI Taxonomy" id="559292"/>
    <lineage>
        <taxon>Eukaryota</taxon>
        <taxon>Fungi</taxon>
        <taxon>Dikarya</taxon>
        <taxon>Ascomycota</taxon>
        <taxon>Saccharomycotina</taxon>
        <taxon>Saccharomycetes</taxon>
        <taxon>Saccharomycetales</taxon>
        <taxon>Saccharomycetaceae</taxon>
        <taxon>Saccharomyces</taxon>
    </lineage>
</organism>
<reference key="1">
    <citation type="journal article" date="1995" name="Yeast">
        <title>Sequence of a 9.8 kb segment of yeast chromosome II including the three genes of the MAL3 locus and three unidentified open reading frames.</title>
        <authorList>
            <person name="Feuermann M."/>
            <person name="Charbonnel L."/>
            <person name="De Montigny J."/>
            <person name="Bloch J.C."/>
            <person name="Potier S."/>
            <person name="Souciet J.-L."/>
        </authorList>
    </citation>
    <scope>NUCLEOTIDE SEQUENCE [GENOMIC DNA]</scope>
    <source>
        <strain>ATCC 204508 / S288c</strain>
    </source>
</reference>
<reference key="2">
    <citation type="journal article" date="1994" name="EMBO J.">
        <title>Complete DNA sequence of yeast chromosome II.</title>
        <authorList>
            <person name="Feldmann H."/>
            <person name="Aigle M."/>
            <person name="Aljinovic G."/>
            <person name="Andre B."/>
            <person name="Baclet M.C."/>
            <person name="Barthe C."/>
            <person name="Baur A."/>
            <person name="Becam A.-M."/>
            <person name="Biteau N."/>
            <person name="Boles E."/>
            <person name="Brandt T."/>
            <person name="Brendel M."/>
            <person name="Brueckner M."/>
            <person name="Bussereau F."/>
            <person name="Christiansen C."/>
            <person name="Contreras R."/>
            <person name="Crouzet M."/>
            <person name="Cziepluch C."/>
            <person name="Demolis N."/>
            <person name="Delaveau T."/>
            <person name="Doignon F."/>
            <person name="Domdey H."/>
            <person name="Duesterhus S."/>
            <person name="Dubois E."/>
            <person name="Dujon B."/>
            <person name="El Bakkoury M."/>
            <person name="Entian K.-D."/>
            <person name="Feuermann M."/>
            <person name="Fiers W."/>
            <person name="Fobo G.M."/>
            <person name="Fritz C."/>
            <person name="Gassenhuber J."/>
            <person name="Glansdorff N."/>
            <person name="Goffeau A."/>
            <person name="Grivell L.A."/>
            <person name="de Haan M."/>
            <person name="Hein C."/>
            <person name="Herbert C.J."/>
            <person name="Hollenberg C.P."/>
            <person name="Holmstroem K."/>
            <person name="Jacq C."/>
            <person name="Jacquet M."/>
            <person name="Jauniaux J.-C."/>
            <person name="Jonniaux J.-L."/>
            <person name="Kallesoee T."/>
            <person name="Kiesau P."/>
            <person name="Kirchrath L."/>
            <person name="Koetter P."/>
            <person name="Korol S."/>
            <person name="Liebl S."/>
            <person name="Logghe M."/>
            <person name="Lohan A.J.E."/>
            <person name="Louis E.J."/>
            <person name="Li Z.Y."/>
            <person name="Maat M.J."/>
            <person name="Mallet L."/>
            <person name="Mannhaupt G."/>
            <person name="Messenguy F."/>
            <person name="Miosga T."/>
            <person name="Molemans F."/>
            <person name="Mueller S."/>
            <person name="Nasr F."/>
            <person name="Obermaier B."/>
            <person name="Perea J."/>
            <person name="Pierard A."/>
            <person name="Piravandi E."/>
            <person name="Pohl F.M."/>
            <person name="Pohl T.M."/>
            <person name="Potier S."/>
            <person name="Proft M."/>
            <person name="Purnelle B."/>
            <person name="Ramezani Rad M."/>
            <person name="Rieger M."/>
            <person name="Rose M."/>
            <person name="Schaaff-Gerstenschlaeger I."/>
            <person name="Scherens B."/>
            <person name="Schwarzlose C."/>
            <person name="Skala J."/>
            <person name="Slonimski P.P."/>
            <person name="Smits P.H.M."/>
            <person name="Souciet J.-L."/>
            <person name="Steensma H.Y."/>
            <person name="Stucka R."/>
            <person name="Urrestarazu L.A."/>
            <person name="van der Aart Q.J.M."/>
            <person name="Van Dyck L."/>
            <person name="Vassarotti A."/>
            <person name="Vetter I."/>
            <person name="Vierendeels F."/>
            <person name="Vissers S."/>
            <person name="Wagner G."/>
            <person name="de Wergifosse P."/>
            <person name="Wolfe K.H."/>
            <person name="Zagulski M."/>
            <person name="Zimmermann F.K."/>
            <person name="Mewes H.-W."/>
            <person name="Kleine K."/>
        </authorList>
    </citation>
    <scope>NUCLEOTIDE SEQUENCE [LARGE SCALE GENOMIC DNA]</scope>
    <source>
        <strain>ATCC 204508 / S288c</strain>
    </source>
</reference>
<reference key="3">
    <citation type="journal article" date="2014" name="G3 (Bethesda)">
        <title>The reference genome sequence of Saccharomyces cerevisiae: Then and now.</title>
        <authorList>
            <person name="Engel S.R."/>
            <person name="Dietrich F.S."/>
            <person name="Fisk D.G."/>
            <person name="Binkley G."/>
            <person name="Balakrishnan R."/>
            <person name="Costanzo M.C."/>
            <person name="Dwight S.S."/>
            <person name="Hitz B.C."/>
            <person name="Karra K."/>
            <person name="Nash R.S."/>
            <person name="Weng S."/>
            <person name="Wong E.D."/>
            <person name="Lloyd P."/>
            <person name="Skrzypek M.S."/>
            <person name="Miyasato S.R."/>
            <person name="Simison M."/>
            <person name="Cherry J.M."/>
        </authorList>
    </citation>
    <scope>GENOME REANNOTATION</scope>
    <source>
        <strain>ATCC 204508 / S288c</strain>
    </source>
</reference>
<reference key="4">
    <citation type="journal article" date="2003" name="Nature">
        <title>Global analysis of protein expression in yeast.</title>
        <authorList>
            <person name="Ghaemmaghami S."/>
            <person name="Huh W.-K."/>
            <person name="Bower K."/>
            <person name="Howson R.W."/>
            <person name="Belle A."/>
            <person name="Dephoure N."/>
            <person name="O'Shea E.K."/>
            <person name="Weissman J.S."/>
        </authorList>
    </citation>
    <scope>LEVEL OF PROTEIN EXPRESSION [LARGE SCALE ANALYSIS]</scope>
</reference>
<proteinExistence type="evidence at protein level"/>
<name>MAL32_YEAST</name>
<evidence type="ECO:0000250" key="1"/>
<evidence type="ECO:0000269" key="2">
    <source>
    </source>
</evidence>
<evidence type="ECO:0000305" key="3"/>
<keyword id="KW-0002">3D-structure</keyword>
<keyword id="KW-0326">Glycosidase</keyword>
<keyword id="KW-0378">Hydrolase</keyword>
<keyword id="KW-0462">Maltose metabolism</keyword>
<keyword id="KW-1185">Reference proteome</keyword>
<sequence>MTISDHPETEPKWWKEATIYQIYPASFKDSNNDGWGDLKGITSKLQYIKDLGVDAIWVCPFYDSPQQDMGYDISNYEKVWPTYGTNEDCFELIDKTHKLGMKFITDLVINHCSTEHEWFKESRSSKTNPKRDWFFWRPPKGYDAEGKPIPPNNWKSFFGGSAWTFDETTNEFYLRLFASRQVDLNWENEDCRRAIFESAVGFWLDHGVDGFRIDTAGLYSKRPGLPDSPIFDKTSKLQHPNWGSHNGPRIHEYHQELHRFMKNRVKDGREIMTVGEVAHGSDNALYTSAARYEVSEVFSFTHVELGTSPFFRYNIVPFTLKQWKEAIASNFLFINGTDSWATTYIENHDQARSITRFADDSPKYRKISGKLLTLLECSLTGTLYVYQGQEIGQINFKEWPIEKYEDVDVKNNYEIIKKSFGKNSKEMKDFFKGIALLSRDHSRTPMPWTKDKPNAGFTGPDVKPWFFLNESFEQGINVEQESRDDDSVLNFWKRALQARKKYKELMIYGYDFQFIDLDSDQIFSFTKEYEDKTLFAALNFSGEEIEFSLPREGASLSFILGNYDDTDVSSRVLKPWEGRIYLVK</sequence>
<comment type="catalytic activity">
    <reaction>
        <text>Hydrolysis of terminal, non-reducing (1-&gt;4)-linked alpha-D-glucose residues with release of alpha-D-glucose.</text>
        <dbReference type="EC" id="3.2.1.20"/>
    </reaction>
</comment>
<comment type="miscellaneous">
    <text evidence="2">Present with 4030 molecules/cell in log phase SD medium.</text>
</comment>
<comment type="similarity">
    <text evidence="3">Belongs to the glycosyl hydrolase 13 family.</text>
</comment>